<proteinExistence type="evidence at transcript level"/>
<accession>Q98876</accession>
<protein>
    <recommendedName>
        <fullName>Homeobox protein Dlx2b</fullName>
    </recommendedName>
    <alternativeName>
        <fullName>DLX-5</fullName>
    </alternativeName>
    <alternativeName>
        <fullName>Distal-less homeobox protein 2b</fullName>
    </alternativeName>
</protein>
<dbReference type="EMBL" id="U67843">
    <property type="protein sequence ID" value="AAC60026.1"/>
    <property type="molecule type" value="mRNA"/>
</dbReference>
<dbReference type="RefSeq" id="NP_571372.1">
    <property type="nucleotide sequence ID" value="NM_131297.2"/>
</dbReference>
<dbReference type="SMR" id="Q98876"/>
<dbReference type="FunCoup" id="Q98876">
    <property type="interactions" value="10"/>
</dbReference>
<dbReference type="STRING" id="7955.ENSDARP00000007080"/>
<dbReference type="PaxDb" id="7955-ENSDARP00000007080"/>
<dbReference type="Ensembl" id="ENSDART00000008469">
    <property type="protein sequence ID" value="ENSDARP00000007080"/>
    <property type="gene ID" value="ENSDARG00000017174"/>
</dbReference>
<dbReference type="Ensembl" id="ENSDART00000183351">
    <property type="protein sequence ID" value="ENSDARP00000148270"/>
    <property type="gene ID" value="ENSDARG00000116017"/>
</dbReference>
<dbReference type="GeneID" id="30557"/>
<dbReference type="KEGG" id="dre:30557"/>
<dbReference type="AGR" id="ZFIN:ZDB-GENE-980526-18"/>
<dbReference type="CTD" id="30557"/>
<dbReference type="ZFIN" id="ZDB-GENE-980526-18">
    <property type="gene designation" value="dlx2b"/>
</dbReference>
<dbReference type="eggNOG" id="KOG0850">
    <property type="taxonomic scope" value="Eukaryota"/>
</dbReference>
<dbReference type="HOGENOM" id="CLU_074733_1_1_1"/>
<dbReference type="InParanoid" id="Q98876"/>
<dbReference type="OMA" id="QPHHNSA"/>
<dbReference type="OrthoDB" id="6159439at2759"/>
<dbReference type="PhylomeDB" id="Q98876"/>
<dbReference type="TreeFam" id="TF350606"/>
<dbReference type="PRO" id="PR:Q98876"/>
<dbReference type="Proteomes" id="UP000000437">
    <property type="component" value="Alternate scaffold 1"/>
</dbReference>
<dbReference type="Proteomes" id="UP000000437">
    <property type="component" value="Chromosome 1"/>
</dbReference>
<dbReference type="Bgee" id="ENSDARG00000017174">
    <property type="expression patterns" value="Expressed in caudal fin and 6 other cell types or tissues"/>
</dbReference>
<dbReference type="ExpressionAtlas" id="Q98876">
    <property type="expression patterns" value="baseline"/>
</dbReference>
<dbReference type="GO" id="GO:0005634">
    <property type="term" value="C:nucleus"/>
    <property type="evidence" value="ECO:0007669"/>
    <property type="project" value="UniProtKB-SubCell"/>
</dbReference>
<dbReference type="GO" id="GO:0000981">
    <property type="term" value="F:DNA-binding transcription factor activity, RNA polymerase II-specific"/>
    <property type="evidence" value="ECO:0000318"/>
    <property type="project" value="GO_Central"/>
</dbReference>
<dbReference type="GO" id="GO:0000978">
    <property type="term" value="F:RNA polymerase II cis-regulatory region sequence-specific DNA binding"/>
    <property type="evidence" value="ECO:0000318"/>
    <property type="project" value="GO_Central"/>
</dbReference>
<dbReference type="GO" id="GO:0030154">
    <property type="term" value="P:cell differentiation"/>
    <property type="evidence" value="ECO:0000318"/>
    <property type="project" value="GO_Central"/>
</dbReference>
<dbReference type="GO" id="GO:0048598">
    <property type="term" value="P:embryonic morphogenesis"/>
    <property type="evidence" value="ECO:0007669"/>
    <property type="project" value="UniProtKB-ARBA"/>
</dbReference>
<dbReference type="GO" id="GO:0048706">
    <property type="term" value="P:embryonic skeletal system development"/>
    <property type="evidence" value="ECO:0000318"/>
    <property type="project" value="GO_Central"/>
</dbReference>
<dbReference type="GO" id="GO:0006357">
    <property type="term" value="P:regulation of transcription by RNA polymerase II"/>
    <property type="evidence" value="ECO:0000318"/>
    <property type="project" value="GO_Central"/>
</dbReference>
<dbReference type="GO" id="GO:0009888">
    <property type="term" value="P:tissue development"/>
    <property type="evidence" value="ECO:0007669"/>
    <property type="project" value="UniProtKB-ARBA"/>
</dbReference>
<dbReference type="CDD" id="cd00086">
    <property type="entry name" value="homeodomain"/>
    <property type="match status" value="1"/>
</dbReference>
<dbReference type="FunFam" id="1.10.10.60:FF:000048">
    <property type="entry name" value="Distal-less homeobox 2"/>
    <property type="match status" value="1"/>
</dbReference>
<dbReference type="Gene3D" id="1.10.10.60">
    <property type="entry name" value="Homeodomain-like"/>
    <property type="match status" value="1"/>
</dbReference>
<dbReference type="InterPro" id="IPR050460">
    <property type="entry name" value="Distal-less_Homeobox_TF"/>
</dbReference>
<dbReference type="InterPro" id="IPR022135">
    <property type="entry name" value="Distal-less_N"/>
</dbReference>
<dbReference type="InterPro" id="IPR001356">
    <property type="entry name" value="HD"/>
</dbReference>
<dbReference type="InterPro" id="IPR020479">
    <property type="entry name" value="HD_metazoa"/>
</dbReference>
<dbReference type="InterPro" id="IPR017970">
    <property type="entry name" value="Homeobox_CS"/>
</dbReference>
<dbReference type="InterPro" id="IPR009057">
    <property type="entry name" value="Homeodomain-like_sf"/>
</dbReference>
<dbReference type="InterPro" id="IPR000047">
    <property type="entry name" value="HTH_motif"/>
</dbReference>
<dbReference type="PANTHER" id="PTHR24327">
    <property type="entry name" value="HOMEOBOX PROTEIN"/>
    <property type="match status" value="1"/>
</dbReference>
<dbReference type="PANTHER" id="PTHR24327:SF82">
    <property type="entry name" value="HOMEOBOX PROTEIN DLX2B"/>
    <property type="match status" value="1"/>
</dbReference>
<dbReference type="Pfam" id="PF12413">
    <property type="entry name" value="DLL_N"/>
    <property type="match status" value="1"/>
</dbReference>
<dbReference type="Pfam" id="PF00046">
    <property type="entry name" value="Homeodomain"/>
    <property type="match status" value="1"/>
</dbReference>
<dbReference type="PRINTS" id="PR00024">
    <property type="entry name" value="HOMEOBOX"/>
</dbReference>
<dbReference type="PRINTS" id="PR00031">
    <property type="entry name" value="HTHREPRESSR"/>
</dbReference>
<dbReference type="SMART" id="SM00389">
    <property type="entry name" value="HOX"/>
    <property type="match status" value="1"/>
</dbReference>
<dbReference type="SUPFAM" id="SSF46689">
    <property type="entry name" value="Homeodomain-like"/>
    <property type="match status" value="1"/>
</dbReference>
<dbReference type="PROSITE" id="PS00027">
    <property type="entry name" value="HOMEOBOX_1"/>
    <property type="match status" value="1"/>
</dbReference>
<dbReference type="PROSITE" id="PS50071">
    <property type="entry name" value="HOMEOBOX_2"/>
    <property type="match status" value="1"/>
</dbReference>
<comment type="subcellular location">
    <subcellularLocation>
        <location evidence="1">Nucleus</location>
    </subcellularLocation>
</comment>
<comment type="similarity">
    <text evidence="3">Belongs to the distal-less homeobox family.</text>
</comment>
<gene>
    <name type="primary">dlx2b</name>
    <name type="synonym">dlx5</name>
</gene>
<feature type="chain" id="PRO_0000049048" description="Homeobox protein Dlx2b">
    <location>
        <begin position="1"/>
        <end position="276"/>
    </location>
</feature>
<feature type="DNA-binding region" description="Homeobox" evidence="1">
    <location>
        <begin position="125"/>
        <end position="184"/>
    </location>
</feature>
<feature type="region of interest" description="Disordered" evidence="2">
    <location>
        <begin position="97"/>
        <end position="123"/>
    </location>
</feature>
<feature type="region of interest" description="Disordered" evidence="2">
    <location>
        <begin position="191"/>
        <end position="238"/>
    </location>
</feature>
<feature type="compositionally biased region" description="Polar residues" evidence="2">
    <location>
        <begin position="218"/>
        <end position="238"/>
    </location>
</feature>
<keyword id="KW-0217">Developmental protein</keyword>
<keyword id="KW-0238">DNA-binding</keyword>
<keyword id="KW-0371">Homeobox</keyword>
<keyword id="KW-0539">Nucleus</keyword>
<keyword id="KW-1185">Reference proteome</keyword>
<reference key="1">
    <citation type="journal article" date="1996" name="Proc. Natl. Acad. Sci. U.S.A.">
        <title>The evolution of the vertebrate Dlx gene family.</title>
        <authorList>
            <person name="Stock D.W."/>
            <person name="Ellies D.L."/>
            <person name="Zhao Z."/>
            <person name="Ekker M."/>
            <person name="Ruddle F.H."/>
            <person name="Weiss K.M."/>
        </authorList>
    </citation>
    <scope>NUCLEOTIDE SEQUENCE [MRNA]</scope>
    <source>
        <tissue>Larva</tissue>
    </source>
</reference>
<name>DLX2B_DANRE</name>
<evidence type="ECO:0000255" key="1">
    <source>
        <dbReference type="PROSITE-ProRule" id="PRU00108"/>
    </source>
</evidence>
<evidence type="ECO:0000256" key="2">
    <source>
        <dbReference type="SAM" id="MobiDB-lite"/>
    </source>
</evidence>
<evidence type="ECO:0000305" key="3"/>
<organism>
    <name type="scientific">Danio rerio</name>
    <name type="common">Zebrafish</name>
    <name type="synonym">Brachydanio rerio</name>
    <dbReference type="NCBI Taxonomy" id="7955"/>
    <lineage>
        <taxon>Eukaryota</taxon>
        <taxon>Metazoa</taxon>
        <taxon>Chordata</taxon>
        <taxon>Craniata</taxon>
        <taxon>Vertebrata</taxon>
        <taxon>Euteleostomi</taxon>
        <taxon>Actinopterygii</taxon>
        <taxon>Neopterygii</taxon>
        <taxon>Teleostei</taxon>
        <taxon>Ostariophysi</taxon>
        <taxon>Cypriniformes</taxon>
        <taxon>Danionidae</taxon>
        <taxon>Danioninae</taxon>
        <taxon>Danio</taxon>
    </lineage>
</organism>
<sequence>MTAVLDSLGSDMHTNHITSSSFSTVHKSQDSPTLPVSTVTDSSFFSSSQTGHCAGTAYAQLASYSYHPGTVGNVHYSPKAYDLGYASSYGAYGTYGASSSPTPTEPEKEESEPEVRMVNGKPKKVRKPRTIYSSFQLAALQRRFQKTQYLALPERAELAASLGLTQTQVKIWFQNRRSKFKKLWKNGEIPADQQVASGDSPSSSPPPQAGWDFPPNPTQNDGDTVSEQPTGPPNTTAPSFLTNYSWYSSTNAVTHLQPSTLIQPHHSSAMSTGTIF</sequence>